<comment type="pathway">
    <text>Cell wall biogenesis; teichuronic acid biosynthesis.</text>
</comment>
<comment type="induction">
    <text>By phosphate starvation, via the PhoP/PhoR two-component regulatory system.</text>
</comment>
<comment type="miscellaneous">
    <text>The nature of the anionic polymer present in the cell wall of B.subtilis depends on phosphate availability. Under phosphate-replete growth conditions teichoic acids are present, whereas under phosphate-depleted conditions, at least part of the wall teichoic acid is replaced with teichuronic acid, a non-phosphate containing anionic polymer. The synthesis of teichuronic acid is accompanied by degradation of teichoic acid and reutilization of liberated phosphate for other cellular processes such as nucleic acid synthesis.</text>
</comment>
<comment type="similarity">
    <text evidence="1">Belongs to the glycosyltransferase group 1 family.</text>
</comment>
<reference key="1">
    <citation type="journal article" date="1999" name="Mol. Microbiol.">
        <title>Teichuronic acid operon of Bacillus subtilis 168.</title>
        <authorList>
            <person name="Soldo B."/>
            <person name="Lazarevic V."/>
            <person name="Pagni M."/>
            <person name="Karamata D."/>
        </authorList>
    </citation>
    <scope>NUCLEOTIDE SEQUENCE [GENOMIC DNA]</scope>
    <source>
        <strain>168</strain>
    </source>
</reference>
<reference key="2">
    <citation type="journal article" date="1997" name="Nature">
        <title>The complete genome sequence of the Gram-positive bacterium Bacillus subtilis.</title>
        <authorList>
            <person name="Kunst F."/>
            <person name="Ogasawara N."/>
            <person name="Moszer I."/>
            <person name="Albertini A.M."/>
            <person name="Alloni G."/>
            <person name="Azevedo V."/>
            <person name="Bertero M.G."/>
            <person name="Bessieres P."/>
            <person name="Bolotin A."/>
            <person name="Borchert S."/>
            <person name="Borriss R."/>
            <person name="Boursier L."/>
            <person name="Brans A."/>
            <person name="Braun M."/>
            <person name="Brignell S.C."/>
            <person name="Bron S."/>
            <person name="Brouillet S."/>
            <person name="Bruschi C.V."/>
            <person name="Caldwell B."/>
            <person name="Capuano V."/>
            <person name="Carter N.M."/>
            <person name="Choi S.-K."/>
            <person name="Codani J.-J."/>
            <person name="Connerton I.F."/>
            <person name="Cummings N.J."/>
            <person name="Daniel R.A."/>
            <person name="Denizot F."/>
            <person name="Devine K.M."/>
            <person name="Duesterhoeft A."/>
            <person name="Ehrlich S.D."/>
            <person name="Emmerson P.T."/>
            <person name="Entian K.-D."/>
            <person name="Errington J."/>
            <person name="Fabret C."/>
            <person name="Ferrari E."/>
            <person name="Foulger D."/>
            <person name="Fritz C."/>
            <person name="Fujita M."/>
            <person name="Fujita Y."/>
            <person name="Fuma S."/>
            <person name="Galizzi A."/>
            <person name="Galleron N."/>
            <person name="Ghim S.-Y."/>
            <person name="Glaser P."/>
            <person name="Goffeau A."/>
            <person name="Golightly E.J."/>
            <person name="Grandi G."/>
            <person name="Guiseppi G."/>
            <person name="Guy B.J."/>
            <person name="Haga K."/>
            <person name="Haiech J."/>
            <person name="Harwood C.R."/>
            <person name="Henaut A."/>
            <person name="Hilbert H."/>
            <person name="Holsappel S."/>
            <person name="Hosono S."/>
            <person name="Hullo M.-F."/>
            <person name="Itaya M."/>
            <person name="Jones L.-M."/>
            <person name="Joris B."/>
            <person name="Karamata D."/>
            <person name="Kasahara Y."/>
            <person name="Klaerr-Blanchard M."/>
            <person name="Klein C."/>
            <person name="Kobayashi Y."/>
            <person name="Koetter P."/>
            <person name="Koningstein G."/>
            <person name="Krogh S."/>
            <person name="Kumano M."/>
            <person name="Kurita K."/>
            <person name="Lapidus A."/>
            <person name="Lardinois S."/>
            <person name="Lauber J."/>
            <person name="Lazarevic V."/>
            <person name="Lee S.-M."/>
            <person name="Levine A."/>
            <person name="Liu H."/>
            <person name="Masuda S."/>
            <person name="Mauel C."/>
            <person name="Medigue C."/>
            <person name="Medina N."/>
            <person name="Mellado R.P."/>
            <person name="Mizuno M."/>
            <person name="Moestl D."/>
            <person name="Nakai S."/>
            <person name="Noback M."/>
            <person name="Noone D."/>
            <person name="O'Reilly M."/>
            <person name="Ogawa K."/>
            <person name="Ogiwara A."/>
            <person name="Oudega B."/>
            <person name="Park S.-H."/>
            <person name="Parro V."/>
            <person name="Pohl T.M."/>
            <person name="Portetelle D."/>
            <person name="Porwollik S."/>
            <person name="Prescott A.M."/>
            <person name="Presecan E."/>
            <person name="Pujic P."/>
            <person name="Purnelle B."/>
            <person name="Rapoport G."/>
            <person name="Rey M."/>
            <person name="Reynolds S."/>
            <person name="Rieger M."/>
            <person name="Rivolta C."/>
            <person name="Rocha E."/>
            <person name="Roche B."/>
            <person name="Rose M."/>
            <person name="Sadaie Y."/>
            <person name="Sato T."/>
            <person name="Scanlan E."/>
            <person name="Schleich S."/>
            <person name="Schroeter R."/>
            <person name="Scoffone F."/>
            <person name="Sekiguchi J."/>
            <person name="Sekowska A."/>
            <person name="Seror S.J."/>
            <person name="Serror P."/>
            <person name="Shin B.-S."/>
            <person name="Soldo B."/>
            <person name="Sorokin A."/>
            <person name="Tacconi E."/>
            <person name="Takagi T."/>
            <person name="Takahashi H."/>
            <person name="Takemaru K."/>
            <person name="Takeuchi M."/>
            <person name="Tamakoshi A."/>
            <person name="Tanaka T."/>
            <person name="Terpstra P."/>
            <person name="Tognoni A."/>
            <person name="Tosato V."/>
            <person name="Uchiyama S."/>
            <person name="Vandenbol M."/>
            <person name="Vannier F."/>
            <person name="Vassarotti A."/>
            <person name="Viari A."/>
            <person name="Wambutt R."/>
            <person name="Wedler E."/>
            <person name="Wedler H."/>
            <person name="Weitzenegger T."/>
            <person name="Winters P."/>
            <person name="Wipat A."/>
            <person name="Yamamoto H."/>
            <person name="Yamane K."/>
            <person name="Yasumoto K."/>
            <person name="Yata K."/>
            <person name="Yoshida K."/>
            <person name="Yoshikawa H.-F."/>
            <person name="Zumstein E."/>
            <person name="Yoshikawa H."/>
            <person name="Danchin A."/>
        </authorList>
    </citation>
    <scope>NUCLEOTIDE SEQUENCE [LARGE SCALE GENOMIC DNA]</scope>
    <source>
        <strain>168</strain>
    </source>
</reference>
<dbReference type="EC" id="2.4.-.-"/>
<dbReference type="EMBL" id="AF015609">
    <property type="protein sequence ID" value="AAB94869.1"/>
    <property type="molecule type" value="Genomic_DNA"/>
</dbReference>
<dbReference type="EMBL" id="AL009126">
    <property type="protein sequence ID" value="CAB15571.1"/>
    <property type="molecule type" value="Genomic_DNA"/>
</dbReference>
<dbReference type="PIR" id="B69728">
    <property type="entry name" value="B69728"/>
</dbReference>
<dbReference type="RefSeq" id="NP_391434.1">
    <property type="nucleotide sequence ID" value="NC_000964.3"/>
</dbReference>
<dbReference type="RefSeq" id="WP_003243252.1">
    <property type="nucleotide sequence ID" value="NZ_OZ025638.1"/>
</dbReference>
<dbReference type="SMR" id="O32267"/>
<dbReference type="FunCoup" id="O32267">
    <property type="interactions" value="5"/>
</dbReference>
<dbReference type="STRING" id="224308.BSU35540"/>
<dbReference type="CAZy" id="GT4">
    <property type="family name" value="Glycosyltransferase Family 4"/>
</dbReference>
<dbReference type="PaxDb" id="224308-BSU35540"/>
<dbReference type="DNASU" id="938535"/>
<dbReference type="EnsemblBacteria" id="CAB15571">
    <property type="protein sequence ID" value="CAB15571"/>
    <property type="gene ID" value="BSU_35540"/>
</dbReference>
<dbReference type="GeneID" id="938535"/>
<dbReference type="KEGG" id="bsu:BSU35540"/>
<dbReference type="PATRIC" id="fig|224308.43.peg.3720"/>
<dbReference type="eggNOG" id="COG0438">
    <property type="taxonomic scope" value="Bacteria"/>
</dbReference>
<dbReference type="InParanoid" id="O32267"/>
<dbReference type="OrthoDB" id="9816564at2"/>
<dbReference type="PhylomeDB" id="O32267"/>
<dbReference type="BioCyc" id="BSUB:BSU35540-MONOMER"/>
<dbReference type="BioCyc" id="MetaCyc:BSU35540-MONOMER"/>
<dbReference type="UniPathway" id="UPA00844"/>
<dbReference type="Proteomes" id="UP000001570">
    <property type="component" value="Chromosome"/>
</dbReference>
<dbReference type="GO" id="GO:0016757">
    <property type="term" value="F:glycosyltransferase activity"/>
    <property type="evidence" value="ECO:0007669"/>
    <property type="project" value="UniProtKB-KW"/>
</dbReference>
<dbReference type="GO" id="GO:0071555">
    <property type="term" value="P:cell wall organization"/>
    <property type="evidence" value="ECO:0007669"/>
    <property type="project" value="UniProtKB-KW"/>
</dbReference>
<dbReference type="GO" id="GO:0050845">
    <property type="term" value="P:teichuronic acid biosynthetic process"/>
    <property type="evidence" value="ECO:0007669"/>
    <property type="project" value="UniProtKB-UniPathway"/>
</dbReference>
<dbReference type="CDD" id="cd04950">
    <property type="entry name" value="GT4_TuaH-like"/>
    <property type="match status" value="1"/>
</dbReference>
<dbReference type="Gene3D" id="3.40.50.2000">
    <property type="entry name" value="Glycogen Phosphorylase B"/>
    <property type="match status" value="2"/>
</dbReference>
<dbReference type="NCBIfam" id="NF047676">
    <property type="entry name" value="TeichurnBiosyTuaH"/>
    <property type="match status" value="1"/>
</dbReference>
<dbReference type="PANTHER" id="PTHR12526">
    <property type="entry name" value="GLYCOSYLTRANSFERASE"/>
    <property type="match status" value="1"/>
</dbReference>
<dbReference type="PANTHER" id="PTHR12526:SF629">
    <property type="entry name" value="TEICHURONIC ACID BIOSYNTHESIS GLYCOSYLTRANSFERASE TUAH-RELATED"/>
    <property type="match status" value="1"/>
</dbReference>
<dbReference type="Pfam" id="PF13692">
    <property type="entry name" value="Glyco_trans_1_4"/>
    <property type="match status" value="1"/>
</dbReference>
<dbReference type="SUPFAM" id="SSF53756">
    <property type="entry name" value="UDP-Glycosyltransferase/glycogen phosphorylase"/>
    <property type="match status" value="1"/>
</dbReference>
<evidence type="ECO:0000305" key="1"/>
<protein>
    <recommendedName>
        <fullName>Putative teichuronic acid biosynthesis glycosyltransferase TuaH</fullName>
        <ecNumber>2.4.-.-</ecNumber>
    </recommendedName>
</protein>
<name>TUAH_BACSU</name>
<organism>
    <name type="scientific">Bacillus subtilis (strain 168)</name>
    <dbReference type="NCBI Taxonomy" id="224308"/>
    <lineage>
        <taxon>Bacteria</taxon>
        <taxon>Bacillati</taxon>
        <taxon>Bacillota</taxon>
        <taxon>Bacilli</taxon>
        <taxon>Bacillales</taxon>
        <taxon>Bacillaceae</taxon>
        <taxon>Bacillus</taxon>
    </lineage>
</organism>
<gene>
    <name type="primary">tuaH</name>
    <name type="synonym">yvhH</name>
    <name type="ordered locus">BSU35540</name>
</gene>
<keyword id="KW-0961">Cell wall biogenesis/degradation</keyword>
<keyword id="KW-0328">Glycosyltransferase</keyword>
<keyword id="KW-1185">Reference proteome</keyword>
<keyword id="KW-0346">Stress response</keyword>
<keyword id="KW-0808">Transferase</keyword>
<sequence>METKEAIIHVIVATAEWGKDQLRYRRHRLAEFLAAQEETKEVIWVCPAPRAQGKEFQEVHSGIRQFAVKDLLQKKMFRFGRYTDVFYRHKLSPLLDELTPASANGERCCLWYTFPGFPLLSSLYSWDQVIYDCSDLWAAPISGRSNLLSEFRRKVIKSAELRIIQRADSITCSSDYLHKEVDKKLTAGREKVHTVENGVEYELFSANKQAPDRSILQGREGIVLGFIGGIKPKLDFKMIKEAALQKPDWTFLWVGPDATNGDVSFQELLRLPNVIWTGPADPKEVPHYMELIDIGIMPYKQSPYNQAVFPLKLFEFLAAGKPVVGTNLPSTSKMQKPYVYEYVEGDHPIDFIAACEKVLGQNGDETYKEMRRNIARTQDWNCLFRQIMKYTGIQKHA</sequence>
<accession>O32267</accession>
<proteinExistence type="evidence at transcript level"/>
<feature type="chain" id="PRO_0000080310" description="Putative teichuronic acid biosynthesis glycosyltransferase TuaH">
    <location>
        <begin position="1"/>
        <end position="397"/>
    </location>
</feature>